<keyword id="KW-0238">DNA-binding</keyword>
<keyword id="KW-0479">Metal-binding</keyword>
<keyword id="KW-0539">Nucleus</keyword>
<keyword id="KW-1185">Reference proteome</keyword>
<keyword id="KW-0677">Repeat</keyword>
<keyword id="KW-0804">Transcription</keyword>
<keyword id="KW-0805">Transcription regulation</keyword>
<keyword id="KW-0862">Zinc</keyword>
<keyword id="KW-0863">Zinc-finger</keyword>
<name>ZN891_HUMAN</name>
<accession>A8MT65</accession>
<reference key="1">
    <citation type="journal article" date="2006" name="Nature">
        <title>The finished DNA sequence of human chromosome 12.</title>
        <authorList>
            <person name="Scherer S.E."/>
            <person name="Muzny D.M."/>
            <person name="Buhay C.J."/>
            <person name="Chen R."/>
            <person name="Cree A."/>
            <person name="Ding Y."/>
            <person name="Dugan-Rocha S."/>
            <person name="Gill R."/>
            <person name="Gunaratne P."/>
            <person name="Harris R.A."/>
            <person name="Hawes A.C."/>
            <person name="Hernandez J."/>
            <person name="Hodgson A.V."/>
            <person name="Hume J."/>
            <person name="Jackson A."/>
            <person name="Khan Z.M."/>
            <person name="Kovar-Smith C."/>
            <person name="Lewis L.R."/>
            <person name="Lozado R.J."/>
            <person name="Metzker M.L."/>
            <person name="Milosavljevic A."/>
            <person name="Miner G.R."/>
            <person name="Montgomery K.T."/>
            <person name="Morgan M.B."/>
            <person name="Nazareth L.V."/>
            <person name="Scott G."/>
            <person name="Sodergren E."/>
            <person name="Song X.-Z."/>
            <person name="Steffen D."/>
            <person name="Lovering R.C."/>
            <person name="Wheeler D.A."/>
            <person name="Worley K.C."/>
            <person name="Yuan Y."/>
            <person name="Zhang Z."/>
            <person name="Adams C.Q."/>
            <person name="Ansari-Lari M.A."/>
            <person name="Ayele M."/>
            <person name="Brown M.J."/>
            <person name="Chen G."/>
            <person name="Chen Z."/>
            <person name="Clerc-Blankenburg K.P."/>
            <person name="Davis C."/>
            <person name="Delgado O."/>
            <person name="Dinh H.H."/>
            <person name="Draper H."/>
            <person name="Gonzalez-Garay M.L."/>
            <person name="Havlak P."/>
            <person name="Jackson L.R."/>
            <person name="Jacob L.S."/>
            <person name="Kelly S.H."/>
            <person name="Li L."/>
            <person name="Li Z."/>
            <person name="Liu J."/>
            <person name="Liu W."/>
            <person name="Lu J."/>
            <person name="Maheshwari M."/>
            <person name="Nguyen B.-V."/>
            <person name="Okwuonu G.O."/>
            <person name="Pasternak S."/>
            <person name="Perez L.M."/>
            <person name="Plopper F.J.H."/>
            <person name="Santibanez J."/>
            <person name="Shen H."/>
            <person name="Tabor P.E."/>
            <person name="Verduzco D."/>
            <person name="Waldron L."/>
            <person name="Wang Q."/>
            <person name="Williams G.A."/>
            <person name="Zhang J."/>
            <person name="Zhou J."/>
            <person name="Allen C.C."/>
            <person name="Amin A.G."/>
            <person name="Anyalebechi V."/>
            <person name="Bailey M."/>
            <person name="Barbaria J.A."/>
            <person name="Bimage K.E."/>
            <person name="Bryant N.P."/>
            <person name="Burch P.E."/>
            <person name="Burkett C.E."/>
            <person name="Burrell K.L."/>
            <person name="Calderon E."/>
            <person name="Cardenas V."/>
            <person name="Carter K."/>
            <person name="Casias K."/>
            <person name="Cavazos I."/>
            <person name="Cavazos S.R."/>
            <person name="Ceasar H."/>
            <person name="Chacko J."/>
            <person name="Chan S.N."/>
            <person name="Chavez D."/>
            <person name="Christopoulos C."/>
            <person name="Chu J."/>
            <person name="Cockrell R."/>
            <person name="Cox C.D."/>
            <person name="Dang M."/>
            <person name="Dathorne S.R."/>
            <person name="David R."/>
            <person name="Davis C.M."/>
            <person name="Davy-Carroll L."/>
            <person name="Deshazo D.R."/>
            <person name="Donlin J.E."/>
            <person name="D'Souza L."/>
            <person name="Eaves K.A."/>
            <person name="Egan A."/>
            <person name="Emery-Cohen A.J."/>
            <person name="Escotto M."/>
            <person name="Flagg N."/>
            <person name="Forbes L.D."/>
            <person name="Gabisi A.M."/>
            <person name="Garza M."/>
            <person name="Hamilton C."/>
            <person name="Henderson N."/>
            <person name="Hernandez O."/>
            <person name="Hines S."/>
            <person name="Hogues M.E."/>
            <person name="Huang M."/>
            <person name="Idlebird D.G."/>
            <person name="Johnson R."/>
            <person name="Jolivet A."/>
            <person name="Jones S."/>
            <person name="Kagan R."/>
            <person name="King L.M."/>
            <person name="Leal B."/>
            <person name="Lebow H."/>
            <person name="Lee S."/>
            <person name="LeVan J.M."/>
            <person name="Lewis L.C."/>
            <person name="London P."/>
            <person name="Lorensuhewa L.M."/>
            <person name="Loulseged H."/>
            <person name="Lovett D.A."/>
            <person name="Lucier A."/>
            <person name="Lucier R.L."/>
            <person name="Ma J."/>
            <person name="Madu R.C."/>
            <person name="Mapua P."/>
            <person name="Martindale A.D."/>
            <person name="Martinez E."/>
            <person name="Massey E."/>
            <person name="Mawhiney S."/>
            <person name="Meador M.G."/>
            <person name="Mendez S."/>
            <person name="Mercado C."/>
            <person name="Mercado I.C."/>
            <person name="Merritt C.E."/>
            <person name="Miner Z.L."/>
            <person name="Minja E."/>
            <person name="Mitchell T."/>
            <person name="Mohabbat F."/>
            <person name="Mohabbat K."/>
            <person name="Montgomery B."/>
            <person name="Moore N."/>
            <person name="Morris S."/>
            <person name="Munidasa M."/>
            <person name="Ngo R.N."/>
            <person name="Nguyen N.B."/>
            <person name="Nickerson E."/>
            <person name="Nwaokelemeh O.O."/>
            <person name="Nwokenkwo S."/>
            <person name="Obregon M."/>
            <person name="Oguh M."/>
            <person name="Oragunye N."/>
            <person name="Oviedo R.J."/>
            <person name="Parish B.J."/>
            <person name="Parker D.N."/>
            <person name="Parrish J."/>
            <person name="Parks K.L."/>
            <person name="Paul H.A."/>
            <person name="Payton B.A."/>
            <person name="Perez A."/>
            <person name="Perrin W."/>
            <person name="Pickens A."/>
            <person name="Primus E.L."/>
            <person name="Pu L.-L."/>
            <person name="Puazo M."/>
            <person name="Quiles M.M."/>
            <person name="Quiroz J.B."/>
            <person name="Rabata D."/>
            <person name="Reeves K."/>
            <person name="Ruiz S.J."/>
            <person name="Shao H."/>
            <person name="Sisson I."/>
            <person name="Sonaike T."/>
            <person name="Sorelle R.P."/>
            <person name="Sutton A.E."/>
            <person name="Svatek A.F."/>
            <person name="Svetz L.A."/>
            <person name="Tamerisa K.S."/>
            <person name="Taylor T.R."/>
            <person name="Teague B."/>
            <person name="Thomas N."/>
            <person name="Thorn R.D."/>
            <person name="Trejos Z.Y."/>
            <person name="Trevino B.K."/>
            <person name="Ukegbu O.N."/>
            <person name="Urban J.B."/>
            <person name="Vasquez L.I."/>
            <person name="Vera V.A."/>
            <person name="Villasana D.M."/>
            <person name="Wang L."/>
            <person name="Ward-Moore S."/>
            <person name="Warren J.T."/>
            <person name="Wei X."/>
            <person name="White F."/>
            <person name="Williamson A.L."/>
            <person name="Wleczyk R."/>
            <person name="Wooden H.S."/>
            <person name="Wooden S.H."/>
            <person name="Yen J."/>
            <person name="Yoon L."/>
            <person name="Yoon V."/>
            <person name="Zorrilla S.E."/>
            <person name="Nelson D."/>
            <person name="Kucherlapati R."/>
            <person name="Weinstock G."/>
            <person name="Gibbs R.A."/>
        </authorList>
    </citation>
    <scope>NUCLEOTIDE SEQUENCE [LARGE SCALE GENOMIC DNA]</scope>
</reference>
<reference key="2">
    <citation type="journal article" date="2004" name="Genome Res.">
        <title>The status, quality, and expansion of the NIH full-length cDNA project: the Mammalian Gene Collection (MGC).</title>
        <authorList>
            <consortium name="The MGC Project Team"/>
        </authorList>
    </citation>
    <scope>NUCLEOTIDE SEQUENCE [LARGE SCALE MRNA] OF 1-305</scope>
</reference>
<sequence length="544" mass="63592">MAVMDLSSPWALTKQDSACFHLRNAEEERMIAVFLTTWLQEPMTFKDVAVEFTQEEWMMLDSAQRSLYRDVMLENYRNLTSVEYQLYRLTVISPLDQEEIRNMKKRIPQAICPDQKIQPKTKESTVQKILWEEPSNAVKMIKLTMHNWSSTLREDWECHKIRKQHKIPGGHWRQMIYAPKKTVPQELFRDYHELEENSKLGSKLIFSQSIFTSKHCQKCYSEIGCLKHNSIINNYVKNSISEKLYESHECDTTLWHFQRNQTVQKEYTYSKHGMHFTHNMFPVPNNLHMAQNACECNKDETLCHQSSLKKQGQTHTEKKHECNQCGKAFKRISNLTLYKKSHMGEKQYECKECGKVFNDSSTLRRHVRTHTGEKPYECNQCGKAFSQKTSLKAHMRTHTGEKPYECNQCGKSFGTSSYLIVHKRIHTGEKLYECSECGKAFNTSSHLKVHKKIHTGENVYECSDCGKVFSGVSSLRMHIRTHTGEKPYECKECRKAFSVSSSLRRHVRIHTGEKPYECIQCGKAFSQSSSLIIHKRIHTERETL</sequence>
<proteinExistence type="evidence at transcript level"/>
<gene>
    <name type="primary">ZNF891</name>
</gene>
<organism>
    <name type="scientific">Homo sapiens</name>
    <name type="common">Human</name>
    <dbReference type="NCBI Taxonomy" id="9606"/>
    <lineage>
        <taxon>Eukaryota</taxon>
        <taxon>Metazoa</taxon>
        <taxon>Chordata</taxon>
        <taxon>Craniata</taxon>
        <taxon>Vertebrata</taxon>
        <taxon>Euteleostomi</taxon>
        <taxon>Mammalia</taxon>
        <taxon>Eutheria</taxon>
        <taxon>Euarchontoglires</taxon>
        <taxon>Primates</taxon>
        <taxon>Haplorrhini</taxon>
        <taxon>Catarrhini</taxon>
        <taxon>Hominidae</taxon>
        <taxon>Homo</taxon>
    </lineage>
</organism>
<dbReference type="EMBL" id="AC026786">
    <property type="status" value="NOT_ANNOTATED_CDS"/>
    <property type="molecule type" value="Genomic_DNA"/>
</dbReference>
<dbReference type="EMBL" id="BC017932">
    <property type="status" value="NOT_ANNOTATED_CDS"/>
    <property type="molecule type" value="mRNA"/>
</dbReference>
<dbReference type="CCDS" id="CCDS59238.1"/>
<dbReference type="RefSeq" id="NP_001264220.1">
    <property type="nucleotide sequence ID" value="NM_001277291.2"/>
</dbReference>
<dbReference type="RefSeq" id="XP_016874155.1">
    <property type="nucleotide sequence ID" value="XM_017018666.1"/>
</dbReference>
<dbReference type="RefSeq" id="XP_016874156.1">
    <property type="nucleotide sequence ID" value="XM_017018667.1"/>
</dbReference>
<dbReference type="RefSeq" id="XP_016874157.1">
    <property type="nucleotide sequence ID" value="XM_017018668.1"/>
</dbReference>
<dbReference type="SMR" id="A8MT65"/>
<dbReference type="BioGRID" id="136313">
    <property type="interactions" value="3"/>
</dbReference>
<dbReference type="FunCoup" id="A8MT65">
    <property type="interactions" value="390"/>
</dbReference>
<dbReference type="IntAct" id="A8MT65">
    <property type="interactions" value="2"/>
</dbReference>
<dbReference type="STRING" id="9606.ENSP00000437590"/>
<dbReference type="iPTMnet" id="A8MT65"/>
<dbReference type="PhosphoSitePlus" id="A8MT65"/>
<dbReference type="BioMuta" id="ZNF891"/>
<dbReference type="jPOST" id="A8MT65"/>
<dbReference type="MassIVE" id="A8MT65"/>
<dbReference type="PaxDb" id="9606-ENSP00000437590"/>
<dbReference type="PeptideAtlas" id="A8MT65"/>
<dbReference type="ProteomicsDB" id="1996"/>
<dbReference type="Antibodypedia" id="49266">
    <property type="antibodies" value="15 antibodies from 6 providers"/>
</dbReference>
<dbReference type="DNASU" id="101060200"/>
<dbReference type="Ensembl" id="ENST00000537226.3">
    <property type="protein sequence ID" value="ENSP00000437590.1"/>
    <property type="gene ID" value="ENSG00000214029.6"/>
</dbReference>
<dbReference type="GeneID" id="101060200"/>
<dbReference type="KEGG" id="hsa:101060200"/>
<dbReference type="MANE-Select" id="ENST00000537226.3">
    <property type="protein sequence ID" value="ENSP00000437590.1"/>
    <property type="RefSeq nucleotide sequence ID" value="NM_001277291.2"/>
    <property type="RefSeq protein sequence ID" value="NP_001264220.1"/>
</dbReference>
<dbReference type="UCSC" id="uc031qkm.2">
    <property type="organism name" value="human"/>
</dbReference>
<dbReference type="AGR" id="HGNC:38709"/>
<dbReference type="CTD" id="101060200"/>
<dbReference type="DisGeNET" id="101060200"/>
<dbReference type="GeneCards" id="ZNF891"/>
<dbReference type="HGNC" id="HGNC:38709">
    <property type="gene designation" value="ZNF891"/>
</dbReference>
<dbReference type="HPA" id="ENSG00000214029">
    <property type="expression patterns" value="Low tissue specificity"/>
</dbReference>
<dbReference type="neXtProt" id="NX_A8MT65"/>
<dbReference type="OpenTargets" id="ENSG00000214029"/>
<dbReference type="VEuPathDB" id="HostDB:ENSG00000214029"/>
<dbReference type="eggNOG" id="KOG1721">
    <property type="taxonomic scope" value="Eukaryota"/>
</dbReference>
<dbReference type="GeneTree" id="ENSGT00940000164587"/>
<dbReference type="HOGENOM" id="CLU_002678_0_2_1"/>
<dbReference type="InParanoid" id="A8MT65"/>
<dbReference type="OMA" id="QHKIPEG"/>
<dbReference type="OrthoDB" id="6077919at2759"/>
<dbReference type="PAN-GO" id="A8MT65">
    <property type="GO annotations" value="3 GO annotations based on evolutionary models"/>
</dbReference>
<dbReference type="PhylomeDB" id="A8MT65"/>
<dbReference type="TreeFam" id="TF337055"/>
<dbReference type="PathwayCommons" id="A8MT65"/>
<dbReference type="SignaLink" id="A8MT65"/>
<dbReference type="BioGRID-ORCS" id="101060200">
    <property type="hits" value="8 hits in 1139 CRISPR screens"/>
</dbReference>
<dbReference type="ChiTaRS" id="ZNF891">
    <property type="organism name" value="human"/>
</dbReference>
<dbReference type="GenomeRNAi" id="101060200"/>
<dbReference type="Pharos" id="A8MT65">
    <property type="development level" value="Tdark"/>
</dbReference>
<dbReference type="PRO" id="PR:A8MT65"/>
<dbReference type="Proteomes" id="UP000005640">
    <property type="component" value="Chromosome 12"/>
</dbReference>
<dbReference type="RNAct" id="A8MT65">
    <property type="molecule type" value="protein"/>
</dbReference>
<dbReference type="Bgee" id="ENSG00000214029">
    <property type="expression patterns" value="Expressed in primordial germ cell in gonad and 136 other cell types or tissues"/>
</dbReference>
<dbReference type="ExpressionAtlas" id="A8MT65">
    <property type="expression patterns" value="baseline and differential"/>
</dbReference>
<dbReference type="GO" id="GO:0005634">
    <property type="term" value="C:nucleus"/>
    <property type="evidence" value="ECO:0000318"/>
    <property type="project" value="GO_Central"/>
</dbReference>
<dbReference type="GO" id="GO:0000981">
    <property type="term" value="F:DNA-binding transcription factor activity, RNA polymerase II-specific"/>
    <property type="evidence" value="ECO:0000318"/>
    <property type="project" value="GO_Central"/>
</dbReference>
<dbReference type="GO" id="GO:0000977">
    <property type="term" value="F:RNA polymerase II transcription regulatory region sequence-specific DNA binding"/>
    <property type="evidence" value="ECO:0000318"/>
    <property type="project" value="GO_Central"/>
</dbReference>
<dbReference type="GO" id="GO:0008270">
    <property type="term" value="F:zinc ion binding"/>
    <property type="evidence" value="ECO:0007669"/>
    <property type="project" value="UniProtKB-KW"/>
</dbReference>
<dbReference type="GO" id="GO:0006357">
    <property type="term" value="P:regulation of transcription by RNA polymerase II"/>
    <property type="evidence" value="ECO:0000318"/>
    <property type="project" value="GO_Central"/>
</dbReference>
<dbReference type="CDD" id="cd07765">
    <property type="entry name" value="KRAB_A-box"/>
    <property type="match status" value="1"/>
</dbReference>
<dbReference type="FunFam" id="3.30.160.60:FF:000003">
    <property type="entry name" value="Zinc finger protein 3 homolog"/>
    <property type="match status" value="1"/>
</dbReference>
<dbReference type="FunFam" id="3.30.160.60:FF:000016">
    <property type="entry name" value="zinc finger protein 37 homolog"/>
    <property type="match status" value="1"/>
</dbReference>
<dbReference type="FunFam" id="3.30.160.60:FF:001498">
    <property type="entry name" value="Zinc finger protein 404"/>
    <property type="match status" value="1"/>
</dbReference>
<dbReference type="FunFam" id="3.30.160.60:FF:002254">
    <property type="entry name" value="Zinc finger protein 540"/>
    <property type="match status" value="2"/>
</dbReference>
<dbReference type="FunFam" id="3.30.160.60:FF:000384">
    <property type="entry name" value="Zinc finger protein 550"/>
    <property type="match status" value="1"/>
</dbReference>
<dbReference type="FunFam" id="3.30.160.60:FF:000281">
    <property type="entry name" value="Zinc finger protein 558 isoform X1"/>
    <property type="match status" value="1"/>
</dbReference>
<dbReference type="FunFam" id="3.30.160.60:FF:001697">
    <property type="entry name" value="zinc finger protein 623"/>
    <property type="match status" value="1"/>
</dbReference>
<dbReference type="Gene3D" id="6.10.140.140">
    <property type="match status" value="1"/>
</dbReference>
<dbReference type="Gene3D" id="3.30.160.60">
    <property type="entry name" value="Classic Zinc Finger"/>
    <property type="match status" value="8"/>
</dbReference>
<dbReference type="InterPro" id="IPR050589">
    <property type="entry name" value="Ikaros_C2H2-ZF"/>
</dbReference>
<dbReference type="InterPro" id="IPR001909">
    <property type="entry name" value="KRAB"/>
</dbReference>
<dbReference type="InterPro" id="IPR036051">
    <property type="entry name" value="KRAB_dom_sf"/>
</dbReference>
<dbReference type="InterPro" id="IPR036236">
    <property type="entry name" value="Znf_C2H2_sf"/>
</dbReference>
<dbReference type="InterPro" id="IPR013087">
    <property type="entry name" value="Znf_C2H2_type"/>
</dbReference>
<dbReference type="PANTHER" id="PTHR24404">
    <property type="entry name" value="ZINC FINGER PROTEIN"/>
    <property type="match status" value="1"/>
</dbReference>
<dbReference type="PANTHER" id="PTHR24404:SF10">
    <property type="entry name" value="ZINC FINGER PROTEIN 564"/>
    <property type="match status" value="1"/>
</dbReference>
<dbReference type="Pfam" id="PF01352">
    <property type="entry name" value="KRAB"/>
    <property type="match status" value="1"/>
</dbReference>
<dbReference type="Pfam" id="PF00096">
    <property type="entry name" value="zf-C2H2"/>
    <property type="match status" value="2"/>
</dbReference>
<dbReference type="Pfam" id="PF13912">
    <property type="entry name" value="zf-C2H2_6"/>
    <property type="match status" value="1"/>
</dbReference>
<dbReference type="Pfam" id="PF13465">
    <property type="entry name" value="zf-H2C2_2"/>
    <property type="match status" value="3"/>
</dbReference>
<dbReference type="SMART" id="SM00349">
    <property type="entry name" value="KRAB"/>
    <property type="match status" value="1"/>
</dbReference>
<dbReference type="SMART" id="SM00355">
    <property type="entry name" value="ZnF_C2H2"/>
    <property type="match status" value="8"/>
</dbReference>
<dbReference type="SUPFAM" id="SSF57667">
    <property type="entry name" value="beta-beta-alpha zinc fingers"/>
    <property type="match status" value="4"/>
</dbReference>
<dbReference type="SUPFAM" id="SSF109640">
    <property type="entry name" value="KRAB domain (Kruppel-associated box)"/>
    <property type="match status" value="1"/>
</dbReference>
<dbReference type="PROSITE" id="PS50805">
    <property type="entry name" value="KRAB"/>
    <property type="match status" value="1"/>
</dbReference>
<dbReference type="PROSITE" id="PS00028">
    <property type="entry name" value="ZINC_FINGER_C2H2_1"/>
    <property type="match status" value="7"/>
</dbReference>
<dbReference type="PROSITE" id="PS50157">
    <property type="entry name" value="ZINC_FINGER_C2H2_2"/>
    <property type="match status" value="8"/>
</dbReference>
<feature type="chain" id="PRO_0000349185" description="Zinc finger protein 891">
    <location>
        <begin position="1"/>
        <end position="544"/>
    </location>
</feature>
<feature type="domain" description="KRAB" evidence="3">
    <location>
        <begin position="43"/>
        <end position="113"/>
    </location>
</feature>
<feature type="zinc finger region" description="C2H2-type 1; degenerate" evidence="2">
    <location>
        <begin position="320"/>
        <end position="342"/>
    </location>
</feature>
<feature type="zinc finger region" description="C2H2-type 2" evidence="2">
    <location>
        <begin position="348"/>
        <end position="370"/>
    </location>
</feature>
<feature type="zinc finger region" description="C2H2-type 3" evidence="2">
    <location>
        <begin position="376"/>
        <end position="398"/>
    </location>
</feature>
<feature type="zinc finger region" description="C2H2-type 4" evidence="2">
    <location>
        <begin position="404"/>
        <end position="426"/>
    </location>
</feature>
<feature type="zinc finger region" description="C2H2-type 5" evidence="2">
    <location>
        <begin position="432"/>
        <end position="454"/>
    </location>
</feature>
<feature type="zinc finger region" description="C2H2-type 6" evidence="2">
    <location>
        <begin position="460"/>
        <end position="482"/>
    </location>
</feature>
<feature type="zinc finger region" description="C2H2-type 7" evidence="2">
    <location>
        <begin position="488"/>
        <end position="510"/>
    </location>
</feature>
<feature type="zinc finger region" description="C2H2-type 8" evidence="2">
    <location>
        <begin position="516"/>
        <end position="538"/>
    </location>
</feature>
<protein>
    <recommendedName>
        <fullName>Zinc finger protein 891</fullName>
    </recommendedName>
</protein>
<comment type="function">
    <text evidence="1">May be involved in transcriptional regulation.</text>
</comment>
<comment type="subcellular location">
    <subcellularLocation>
        <location evidence="1">Nucleus</location>
    </subcellularLocation>
</comment>
<comment type="similarity">
    <text evidence="4">Belongs to the krueppel C2H2-type zinc-finger protein family.</text>
</comment>
<comment type="sequence caution" evidence="4">
    <conflict type="miscellaneous discrepancy">
        <sequence resource="EMBL" id="BC017932"/>
    </conflict>
    <text>Contaminating sequence. Potential poly-A sequence.</text>
</comment>
<evidence type="ECO:0000250" key="1"/>
<evidence type="ECO:0000255" key="2">
    <source>
        <dbReference type="PROSITE-ProRule" id="PRU00042"/>
    </source>
</evidence>
<evidence type="ECO:0000255" key="3">
    <source>
        <dbReference type="PROSITE-ProRule" id="PRU00119"/>
    </source>
</evidence>
<evidence type="ECO:0000305" key="4"/>